<feature type="chain" id="PRO_0000071816" description="UPF0225 protein SAV_6631">
    <location>
        <begin position="1"/>
        <end position="140"/>
    </location>
</feature>
<feature type="region of interest" description="Disordered" evidence="2">
    <location>
        <begin position="1"/>
        <end position="22"/>
    </location>
</feature>
<feature type="compositionally biased region" description="Low complexity" evidence="2">
    <location>
        <begin position="10"/>
        <end position="19"/>
    </location>
</feature>
<keyword id="KW-1185">Reference proteome</keyword>
<protein>
    <recommendedName>
        <fullName evidence="1">UPF0225 protein SAV_6631</fullName>
    </recommendedName>
</protein>
<evidence type="ECO:0000255" key="1">
    <source>
        <dbReference type="HAMAP-Rule" id="MF_00612"/>
    </source>
</evidence>
<evidence type="ECO:0000256" key="2">
    <source>
        <dbReference type="SAM" id="MobiDB-lite"/>
    </source>
</evidence>
<comment type="similarity">
    <text evidence="1">Belongs to the UPF0225 family.</text>
</comment>
<accession>Q93H19</accession>
<organism>
    <name type="scientific">Streptomyces avermitilis (strain ATCC 31267 / DSM 46492 / JCM 5070 / NBRC 14893 / NCIMB 12804 / NRRL 8165 / MA-4680)</name>
    <dbReference type="NCBI Taxonomy" id="227882"/>
    <lineage>
        <taxon>Bacteria</taxon>
        <taxon>Bacillati</taxon>
        <taxon>Actinomycetota</taxon>
        <taxon>Actinomycetes</taxon>
        <taxon>Kitasatosporales</taxon>
        <taxon>Streptomycetaceae</taxon>
        <taxon>Streptomyces</taxon>
    </lineage>
</organism>
<name>Y6631_STRAW</name>
<reference key="1">
    <citation type="journal article" date="2001" name="Proc. Natl. Acad. Sci. U.S.A.">
        <title>Genome sequence of an industrial microorganism Streptomyces avermitilis: deducing the ability of producing secondary metabolites.</title>
        <authorList>
            <person name="Omura S."/>
            <person name="Ikeda H."/>
            <person name="Ishikawa J."/>
            <person name="Hanamoto A."/>
            <person name="Takahashi C."/>
            <person name="Shinose M."/>
            <person name="Takahashi Y."/>
            <person name="Horikawa H."/>
            <person name="Nakazawa H."/>
            <person name="Osonoe T."/>
            <person name="Kikuchi H."/>
            <person name="Shiba T."/>
            <person name="Sakaki Y."/>
            <person name="Hattori M."/>
        </authorList>
    </citation>
    <scope>NUCLEOTIDE SEQUENCE [LARGE SCALE GENOMIC DNA]</scope>
    <source>
        <strain>ATCC 31267 / DSM 46492 / JCM 5070 / NBRC 14893 / NCIMB 12804 / NRRL 8165 / MA-4680</strain>
    </source>
</reference>
<reference key="2">
    <citation type="journal article" date="2003" name="Nat. Biotechnol.">
        <title>Complete genome sequence and comparative analysis of the industrial microorganism Streptomyces avermitilis.</title>
        <authorList>
            <person name="Ikeda H."/>
            <person name="Ishikawa J."/>
            <person name="Hanamoto A."/>
            <person name="Shinose M."/>
            <person name="Kikuchi H."/>
            <person name="Shiba T."/>
            <person name="Sakaki Y."/>
            <person name="Hattori M."/>
            <person name="Omura S."/>
        </authorList>
    </citation>
    <scope>NUCLEOTIDE SEQUENCE [LARGE SCALE GENOMIC DNA]</scope>
    <source>
        <strain>ATCC 31267 / DSM 46492 / JCM 5070 / NBRC 14893 / NCIMB 12804 / NRRL 8165 / MA-4680</strain>
    </source>
</reference>
<proteinExistence type="inferred from homology"/>
<gene>
    <name type="ordered locus">SAV_6631</name>
</gene>
<sequence>MSKSRRTRSTSRPTSRPQPASCPCGLPEVYEACCGRFHSGAADAPTAALLMRSRYCAFVRRDEAYLLRTWHPRTRPAEVDFDPRMRWTGLEILGTTEGSAFHSAGTVTFRASYRGGALQERSRFERIGGAWVYVDGEFFE</sequence>
<dbReference type="EMBL" id="AB070954">
    <property type="protein sequence ID" value="BAB69372.1"/>
    <property type="molecule type" value="Genomic_DNA"/>
</dbReference>
<dbReference type="EMBL" id="BA000030">
    <property type="protein sequence ID" value="BAC74342.1"/>
    <property type="molecule type" value="Genomic_DNA"/>
</dbReference>
<dbReference type="RefSeq" id="WP_010988032.1">
    <property type="nucleotide sequence ID" value="NZ_JZJK01000082.1"/>
</dbReference>
<dbReference type="SMR" id="Q93H19"/>
<dbReference type="GeneID" id="41543701"/>
<dbReference type="KEGG" id="sma:SAVERM_6631"/>
<dbReference type="eggNOG" id="COG3012">
    <property type="taxonomic scope" value="Bacteria"/>
</dbReference>
<dbReference type="HOGENOM" id="CLU_099590_2_0_11"/>
<dbReference type="OrthoDB" id="21421at2"/>
<dbReference type="Proteomes" id="UP000000428">
    <property type="component" value="Chromosome"/>
</dbReference>
<dbReference type="Gene3D" id="3.10.450.50">
    <property type="match status" value="1"/>
</dbReference>
<dbReference type="HAMAP" id="MF_00612">
    <property type="entry name" value="UPF0225"/>
    <property type="match status" value="1"/>
</dbReference>
<dbReference type="InterPro" id="IPR032710">
    <property type="entry name" value="NTF2-like_dom_sf"/>
</dbReference>
<dbReference type="InterPro" id="IPR023006">
    <property type="entry name" value="UPF0225"/>
</dbReference>
<dbReference type="InterPro" id="IPR048469">
    <property type="entry name" value="YchJ-like_M"/>
</dbReference>
<dbReference type="PANTHER" id="PTHR33747:SF1">
    <property type="entry name" value="ADENYLATE CYCLASE-ASSOCIATED CAP C-TERMINAL DOMAIN-CONTAINING PROTEIN"/>
    <property type="match status" value="1"/>
</dbReference>
<dbReference type="PANTHER" id="PTHR33747">
    <property type="entry name" value="UPF0225 PROTEIN SCO1677"/>
    <property type="match status" value="1"/>
</dbReference>
<dbReference type="Pfam" id="PF17775">
    <property type="entry name" value="YchJ_M-like"/>
    <property type="match status" value="1"/>
</dbReference>
<dbReference type="SUPFAM" id="SSF54427">
    <property type="entry name" value="NTF2-like"/>
    <property type="match status" value="1"/>
</dbReference>